<reference key="1">
    <citation type="journal article" date="2006" name="Lancet">
        <title>Complete genome sequence of USA300, an epidemic clone of community-acquired meticillin-resistant Staphylococcus aureus.</title>
        <authorList>
            <person name="Diep B.A."/>
            <person name="Gill S.R."/>
            <person name="Chang R.F."/>
            <person name="Phan T.H."/>
            <person name="Chen J.H."/>
            <person name="Davidson M.G."/>
            <person name="Lin F."/>
            <person name="Lin J."/>
            <person name="Carleton H.A."/>
            <person name="Mongodin E.F."/>
            <person name="Sensabaugh G.F."/>
            <person name="Perdreau-Remington F."/>
        </authorList>
    </citation>
    <scope>NUCLEOTIDE SEQUENCE [LARGE SCALE GENOMIC DNA]</scope>
    <source>
        <strain>USA300</strain>
    </source>
</reference>
<comment type="function">
    <text evidence="1">Sigma factors are initiation factors that promote the attachment of RNA polymerase to specific initiation sites and are then released. Sigma-S contributes to the protection against external stress, thus playing a role in cellular fitness and survival (By similarity).</text>
</comment>
<comment type="similarity">
    <text evidence="2">Belongs to the sigma-70 factor family.</text>
</comment>
<comment type="sequence caution" evidence="2">
    <conflict type="erroneous initiation">
        <sequence resource="EMBL-CDS" id="ABD20491"/>
    </conflict>
</comment>
<evidence type="ECO:0000250" key="1"/>
<evidence type="ECO:0000305" key="2"/>
<feature type="chain" id="PRO_0000367457" description="RNA polymerase sigma factor SigS">
    <location>
        <begin position="1"/>
        <end position="156"/>
    </location>
</feature>
<feature type="DNA-binding region" description="H-T-H motif" evidence="1">
    <location>
        <begin position="126"/>
        <end position="145"/>
    </location>
</feature>
<feature type="short sequence motif" description="Polymerase core binding">
    <location>
        <begin position="29"/>
        <end position="44"/>
    </location>
</feature>
<sequence>MKFNDVYNKHHKIIHHLLKKYNISYNYDEYYQLLLIKMWQLSQIYKPSSKQSLSSFLFTRLNFYLIDLFRQQNQLKDVILCENNSPTLTEQPTYFNEHDLRLQDIFKLLNQRERLWLKLYLEGYKQFEIAEIMSLSLSTIKLIKMSVKRKCQHNFN</sequence>
<organism>
    <name type="scientific">Staphylococcus aureus (strain USA300)</name>
    <dbReference type="NCBI Taxonomy" id="367830"/>
    <lineage>
        <taxon>Bacteria</taxon>
        <taxon>Bacillati</taxon>
        <taxon>Bacillota</taxon>
        <taxon>Bacilli</taxon>
        <taxon>Bacillales</taxon>
        <taxon>Staphylococcaceae</taxon>
        <taxon>Staphylococcus</taxon>
    </lineage>
</organism>
<name>SIGS_STAA3</name>
<keyword id="KW-0238">DNA-binding</keyword>
<keyword id="KW-0731">Sigma factor</keyword>
<keyword id="KW-0804">Transcription</keyword>
<keyword id="KW-0805">Transcription regulation</keyword>
<gene>
    <name type="primary">sigS</name>
    <name type="ordered locus">SAUSA300_1722</name>
</gene>
<protein>
    <recommendedName>
        <fullName>RNA polymerase sigma factor SigS</fullName>
    </recommendedName>
</protein>
<proteinExistence type="inferred from homology"/>
<accession>Q2FFW3</accession>
<dbReference type="EMBL" id="CP000255">
    <property type="protein sequence ID" value="ABD20491.1"/>
    <property type="status" value="ALT_INIT"/>
    <property type="molecule type" value="Genomic_DNA"/>
</dbReference>
<dbReference type="RefSeq" id="WP_000671052.1">
    <property type="nucleotide sequence ID" value="NZ_CP027476.1"/>
</dbReference>
<dbReference type="SMR" id="Q2FFW3"/>
<dbReference type="KEGG" id="saa:SAUSA300_1722"/>
<dbReference type="HOGENOM" id="CLU_047691_20_2_9"/>
<dbReference type="Proteomes" id="UP000001939">
    <property type="component" value="Chromosome"/>
</dbReference>
<dbReference type="GO" id="GO:0003677">
    <property type="term" value="F:DNA binding"/>
    <property type="evidence" value="ECO:0007669"/>
    <property type="project" value="UniProtKB-KW"/>
</dbReference>
<dbReference type="GO" id="GO:0016987">
    <property type="term" value="F:sigma factor activity"/>
    <property type="evidence" value="ECO:0007669"/>
    <property type="project" value="UniProtKB-KW"/>
</dbReference>
<dbReference type="GO" id="GO:0006352">
    <property type="term" value="P:DNA-templated transcription initiation"/>
    <property type="evidence" value="ECO:0007669"/>
    <property type="project" value="InterPro"/>
</dbReference>
<dbReference type="Gene3D" id="1.10.10.10">
    <property type="entry name" value="Winged helix-like DNA-binding domain superfamily/Winged helix DNA-binding domain"/>
    <property type="match status" value="1"/>
</dbReference>
<dbReference type="InterPro" id="IPR014284">
    <property type="entry name" value="RNA_pol_sigma-70_dom"/>
</dbReference>
<dbReference type="InterPro" id="IPR007627">
    <property type="entry name" value="RNA_pol_sigma70_r2"/>
</dbReference>
<dbReference type="InterPro" id="IPR013325">
    <property type="entry name" value="RNA_pol_sigma_r2"/>
</dbReference>
<dbReference type="InterPro" id="IPR016032">
    <property type="entry name" value="Sig_transdc_resp-reg_C-effctor"/>
</dbReference>
<dbReference type="InterPro" id="IPR036388">
    <property type="entry name" value="WH-like_DNA-bd_sf"/>
</dbReference>
<dbReference type="NCBIfam" id="TIGR02937">
    <property type="entry name" value="sigma70-ECF"/>
    <property type="match status" value="1"/>
</dbReference>
<dbReference type="Pfam" id="PF04542">
    <property type="entry name" value="Sigma70_r2"/>
    <property type="match status" value="1"/>
</dbReference>
<dbReference type="SUPFAM" id="SSF46894">
    <property type="entry name" value="C-terminal effector domain of the bipartite response regulators"/>
    <property type="match status" value="1"/>
</dbReference>
<dbReference type="SUPFAM" id="SSF88946">
    <property type="entry name" value="Sigma2 domain of RNA polymerase sigma factors"/>
    <property type="match status" value="1"/>
</dbReference>